<evidence type="ECO:0000250" key="1">
    <source>
        <dbReference type="UniProtKB" id="O94822"/>
    </source>
</evidence>
<evidence type="ECO:0000250" key="2">
    <source>
        <dbReference type="UniProtKB" id="Q04781"/>
    </source>
</evidence>
<evidence type="ECO:0000255" key="3"/>
<evidence type="ECO:0000255" key="4">
    <source>
        <dbReference type="PROSITE-ProRule" id="PRU00175"/>
    </source>
</evidence>
<evidence type="ECO:0000256" key="5">
    <source>
        <dbReference type="SAM" id="MobiDB-lite"/>
    </source>
</evidence>
<evidence type="ECO:0000269" key="6">
    <source>
    </source>
</evidence>
<evidence type="ECO:0000269" key="7">
    <source>
    </source>
</evidence>
<evidence type="ECO:0000303" key="8">
    <source>
    </source>
</evidence>
<evidence type="ECO:0000305" key="9"/>
<evidence type="ECO:0000312" key="10">
    <source>
        <dbReference type="FlyBase" id="FBgn0262517"/>
    </source>
</evidence>
<proteinExistence type="evidence at protein level"/>
<protein>
    <recommendedName>
        <fullName>E3 ubiquitin-protein ligase listerin</fullName>
        <ecNumber evidence="2">2.3.2.27</ecNumber>
    </recommendedName>
    <alternativeName>
        <fullName evidence="8 10">Listerin E3 ubiquitin protein ligase 1</fullName>
    </alternativeName>
    <alternativeName>
        <fullName evidence="9">RING-type E3 ubiquitin transferase listerin</fullName>
    </alternativeName>
</protein>
<accession>Q9VW09</accession>
<accession>Q8T3L4</accession>
<comment type="function">
    <text evidence="1 2 7">E3 ubiquitin-protein ligase component of the ribosome quality control complex (RQC), a ribosome-associated complex that mediates ubiquitination and extraction of incompletely synthesized nascent chains for proteasomal degradation (PubMed:25128630). Ubiquitination leads to TER94/VCP recruitment for extraction and degradation of the incomplete translation product (By similarity).</text>
</comment>
<comment type="catalytic activity">
    <reaction evidence="2">
        <text>S-ubiquitinyl-[E2 ubiquitin-conjugating enzyme]-L-cysteine + [acceptor protein]-L-lysine = [E2 ubiquitin-conjugating enzyme]-L-cysteine + N(6)-ubiquitinyl-[acceptor protein]-L-lysine.</text>
        <dbReference type="EC" id="2.3.2.27"/>
    </reaction>
</comment>
<comment type="pathway">
    <text>Protein modification; protein ubiquitination.</text>
</comment>
<comment type="subunit">
    <text evidence="1 2">Component of the ribosome quality control complex (RQC), composed of at least the E3 ubiquitin ligase l(3)76BDr/LTN1 and Clbn/NEMF. The complex probably also contains TCF25 as well as TER94/VCP and its ubiquitin-binding cofactors. RQC forms a stable complex with 60S ribosomal subunits.</text>
</comment>
<comment type="subcellular location">
    <subcellularLocation>
        <location evidence="1">Cytoplasm</location>
        <location evidence="1">Cytosol</location>
    </subcellularLocation>
</comment>
<comment type="similarity">
    <text evidence="9">Belongs to the LTN1 family.</text>
</comment>
<reference key="1">
    <citation type="journal article" date="2000" name="Science">
        <title>The genome sequence of Drosophila melanogaster.</title>
        <authorList>
            <person name="Adams M.D."/>
            <person name="Celniker S.E."/>
            <person name="Holt R.A."/>
            <person name="Evans C.A."/>
            <person name="Gocayne J.D."/>
            <person name="Amanatides P.G."/>
            <person name="Scherer S.E."/>
            <person name="Li P.W."/>
            <person name="Hoskins R.A."/>
            <person name="Galle R.F."/>
            <person name="George R.A."/>
            <person name="Lewis S.E."/>
            <person name="Richards S."/>
            <person name="Ashburner M."/>
            <person name="Henderson S.N."/>
            <person name="Sutton G.G."/>
            <person name="Wortman J.R."/>
            <person name="Yandell M.D."/>
            <person name="Zhang Q."/>
            <person name="Chen L.X."/>
            <person name="Brandon R.C."/>
            <person name="Rogers Y.-H.C."/>
            <person name="Blazej R.G."/>
            <person name="Champe M."/>
            <person name="Pfeiffer B.D."/>
            <person name="Wan K.H."/>
            <person name="Doyle C."/>
            <person name="Baxter E.G."/>
            <person name="Helt G."/>
            <person name="Nelson C.R."/>
            <person name="Miklos G.L.G."/>
            <person name="Abril J.F."/>
            <person name="Agbayani A."/>
            <person name="An H.-J."/>
            <person name="Andrews-Pfannkoch C."/>
            <person name="Baldwin D."/>
            <person name="Ballew R.M."/>
            <person name="Basu A."/>
            <person name="Baxendale J."/>
            <person name="Bayraktaroglu L."/>
            <person name="Beasley E.M."/>
            <person name="Beeson K.Y."/>
            <person name="Benos P.V."/>
            <person name="Berman B.P."/>
            <person name="Bhandari D."/>
            <person name="Bolshakov S."/>
            <person name="Borkova D."/>
            <person name="Botchan M.R."/>
            <person name="Bouck J."/>
            <person name="Brokstein P."/>
            <person name="Brottier P."/>
            <person name="Burtis K.C."/>
            <person name="Busam D.A."/>
            <person name="Butler H."/>
            <person name="Cadieu E."/>
            <person name="Center A."/>
            <person name="Chandra I."/>
            <person name="Cherry J.M."/>
            <person name="Cawley S."/>
            <person name="Dahlke C."/>
            <person name="Davenport L.B."/>
            <person name="Davies P."/>
            <person name="de Pablos B."/>
            <person name="Delcher A."/>
            <person name="Deng Z."/>
            <person name="Mays A.D."/>
            <person name="Dew I."/>
            <person name="Dietz S.M."/>
            <person name="Dodson K."/>
            <person name="Doup L.E."/>
            <person name="Downes M."/>
            <person name="Dugan-Rocha S."/>
            <person name="Dunkov B.C."/>
            <person name="Dunn P."/>
            <person name="Durbin K.J."/>
            <person name="Evangelista C.C."/>
            <person name="Ferraz C."/>
            <person name="Ferriera S."/>
            <person name="Fleischmann W."/>
            <person name="Fosler C."/>
            <person name="Gabrielian A.E."/>
            <person name="Garg N.S."/>
            <person name="Gelbart W.M."/>
            <person name="Glasser K."/>
            <person name="Glodek A."/>
            <person name="Gong F."/>
            <person name="Gorrell J.H."/>
            <person name="Gu Z."/>
            <person name="Guan P."/>
            <person name="Harris M."/>
            <person name="Harris N.L."/>
            <person name="Harvey D.A."/>
            <person name="Heiman T.J."/>
            <person name="Hernandez J.R."/>
            <person name="Houck J."/>
            <person name="Hostin D."/>
            <person name="Houston K.A."/>
            <person name="Howland T.J."/>
            <person name="Wei M.-H."/>
            <person name="Ibegwam C."/>
            <person name="Jalali M."/>
            <person name="Kalush F."/>
            <person name="Karpen G.H."/>
            <person name="Ke Z."/>
            <person name="Kennison J.A."/>
            <person name="Ketchum K.A."/>
            <person name="Kimmel B.E."/>
            <person name="Kodira C.D."/>
            <person name="Kraft C.L."/>
            <person name="Kravitz S."/>
            <person name="Kulp D."/>
            <person name="Lai Z."/>
            <person name="Lasko P."/>
            <person name="Lei Y."/>
            <person name="Levitsky A.A."/>
            <person name="Li J.H."/>
            <person name="Li Z."/>
            <person name="Liang Y."/>
            <person name="Lin X."/>
            <person name="Liu X."/>
            <person name="Mattei B."/>
            <person name="McIntosh T.C."/>
            <person name="McLeod M.P."/>
            <person name="McPherson D."/>
            <person name="Merkulov G."/>
            <person name="Milshina N.V."/>
            <person name="Mobarry C."/>
            <person name="Morris J."/>
            <person name="Moshrefi A."/>
            <person name="Mount S.M."/>
            <person name="Moy M."/>
            <person name="Murphy B."/>
            <person name="Murphy L."/>
            <person name="Muzny D.M."/>
            <person name="Nelson D.L."/>
            <person name="Nelson D.R."/>
            <person name="Nelson K.A."/>
            <person name="Nixon K."/>
            <person name="Nusskern D.R."/>
            <person name="Pacleb J.M."/>
            <person name="Palazzolo M."/>
            <person name="Pittman G.S."/>
            <person name="Pan S."/>
            <person name="Pollard J."/>
            <person name="Puri V."/>
            <person name="Reese M.G."/>
            <person name="Reinert K."/>
            <person name="Remington K."/>
            <person name="Saunders R.D.C."/>
            <person name="Scheeler F."/>
            <person name="Shen H."/>
            <person name="Shue B.C."/>
            <person name="Siden-Kiamos I."/>
            <person name="Simpson M."/>
            <person name="Skupski M.P."/>
            <person name="Smith T.J."/>
            <person name="Spier E."/>
            <person name="Spradling A.C."/>
            <person name="Stapleton M."/>
            <person name="Strong R."/>
            <person name="Sun E."/>
            <person name="Svirskas R."/>
            <person name="Tector C."/>
            <person name="Turner R."/>
            <person name="Venter E."/>
            <person name="Wang A.H."/>
            <person name="Wang X."/>
            <person name="Wang Z.-Y."/>
            <person name="Wassarman D.A."/>
            <person name="Weinstock G.M."/>
            <person name="Weissenbach J."/>
            <person name="Williams S.M."/>
            <person name="Woodage T."/>
            <person name="Worley K.C."/>
            <person name="Wu D."/>
            <person name="Yang S."/>
            <person name="Yao Q.A."/>
            <person name="Ye J."/>
            <person name="Yeh R.-F."/>
            <person name="Zaveri J.S."/>
            <person name="Zhan M."/>
            <person name="Zhang G."/>
            <person name="Zhao Q."/>
            <person name="Zheng L."/>
            <person name="Zheng X.H."/>
            <person name="Zhong F.N."/>
            <person name="Zhong W."/>
            <person name="Zhou X."/>
            <person name="Zhu S.C."/>
            <person name="Zhu X."/>
            <person name="Smith H.O."/>
            <person name="Gibbs R.A."/>
            <person name="Myers E.W."/>
            <person name="Rubin G.M."/>
            <person name="Venter J.C."/>
        </authorList>
    </citation>
    <scope>NUCLEOTIDE SEQUENCE [LARGE SCALE GENOMIC DNA]</scope>
    <source>
        <strain>Berkeley</strain>
    </source>
</reference>
<reference key="2">
    <citation type="journal article" date="2002" name="Genome Biol.">
        <title>Annotation of the Drosophila melanogaster euchromatic genome: a systematic review.</title>
        <authorList>
            <person name="Misra S."/>
            <person name="Crosby M.A."/>
            <person name="Mungall C.J."/>
            <person name="Matthews B.B."/>
            <person name="Campbell K.S."/>
            <person name="Hradecky P."/>
            <person name="Huang Y."/>
            <person name="Kaminker J.S."/>
            <person name="Millburn G.H."/>
            <person name="Prochnik S.E."/>
            <person name="Smith C.D."/>
            <person name="Tupy J.L."/>
            <person name="Whitfield E.J."/>
            <person name="Bayraktaroglu L."/>
            <person name="Berman B.P."/>
            <person name="Bettencourt B.R."/>
            <person name="Celniker S.E."/>
            <person name="de Grey A.D.N.J."/>
            <person name="Drysdale R.A."/>
            <person name="Harris N.L."/>
            <person name="Richter J."/>
            <person name="Russo S."/>
            <person name="Schroeder A.J."/>
            <person name="Shu S.Q."/>
            <person name="Stapleton M."/>
            <person name="Yamada C."/>
            <person name="Ashburner M."/>
            <person name="Gelbart W.M."/>
            <person name="Rubin G.M."/>
            <person name="Lewis S.E."/>
        </authorList>
    </citation>
    <scope>GENOME REANNOTATION</scope>
    <source>
        <strain>Berkeley</strain>
    </source>
</reference>
<reference key="3">
    <citation type="journal article" date="2002" name="Genome Biol.">
        <title>A Drosophila full-length cDNA resource.</title>
        <authorList>
            <person name="Stapleton M."/>
            <person name="Carlson J.W."/>
            <person name="Brokstein P."/>
            <person name="Yu C."/>
            <person name="Champe M."/>
            <person name="George R.A."/>
            <person name="Guarin H."/>
            <person name="Kronmiller B."/>
            <person name="Pacleb J.M."/>
            <person name="Park S."/>
            <person name="Wan K.H."/>
            <person name="Rubin G.M."/>
            <person name="Celniker S.E."/>
        </authorList>
    </citation>
    <scope>NUCLEOTIDE SEQUENCE [LARGE SCALE MRNA]</scope>
    <source>
        <strain>Berkeley</strain>
        <tissue>Embryo</tissue>
    </source>
</reference>
<reference key="4">
    <citation type="journal article" date="2008" name="J. Proteome Res.">
        <title>Phosphoproteome analysis of Drosophila melanogaster embryos.</title>
        <authorList>
            <person name="Zhai B."/>
            <person name="Villen J."/>
            <person name="Beausoleil S.A."/>
            <person name="Mintseris J."/>
            <person name="Gygi S.P."/>
        </authorList>
    </citation>
    <scope>PHOSPHORYLATION [LARGE SCALE ANALYSIS] AT SER-566</scope>
    <scope>IDENTIFICATION BY MASS SPECTROMETRY</scope>
    <source>
        <tissue>Embryo</tissue>
    </source>
</reference>
<reference key="5">
    <citation type="journal article" date="2014" name="Biochimie">
        <title>A functional involvement of ABCE1, eukaryotic ribosome recycling factor, in nonstop mRNA decay in Drosophila melanogaster cells.</title>
        <authorList>
            <person name="Kashima I."/>
            <person name="Takahashi M."/>
            <person name="Hashimoto Y."/>
            <person name="Sakota E."/>
            <person name="Nakamura Y."/>
            <person name="Inada T."/>
        </authorList>
    </citation>
    <scope>FUNCTION</scope>
</reference>
<sequence>MGGKTKQAPRTKNNAKPSSSSRTAELLGSSTPIFVGFSAQTDGGGLVPFAPGFASAEQMPDSFDAAISPQTQIILRKLSKKDPMTKKKALQELHELIEQSDVEVLKNILPLWPKYYLNLASDPEHTVREQTQTVLQLLMAKCKKAMAPYLKLLVPVWLGSRFDTYAPAASIASQSFRDTFAGNANRSREVCMHCQVEILEYATRNLTFHTAATLSIGKSLTPEDAEQKYQRVIISSLKLLSFFMGQTAQTEELSQVKEGFGTLVAHQKFWSFAKHKVPAIKAAWFECIYHILQSVALLDVITPQKTQLTNLCFQFIDDADPVVAPHIWGCVLLLQSNYVDWFVPLNIRKTLLPKLSSLLQNGFNRNAQAICPNLLPFLSKVTQASLQDLDIYDFYQRFFDDMKLAVTKKFDPPLSKSDCIVIHNAYFECLRFLMQQINNNKQREQKEEEFSFSLLDNNVLEPIAWLLKSDSTHVKIFFQHSSALVAFWDRQINNRLDNGDLYAKLLNKFWIRIFELVTQDLSAEEVNEQLLGHVLLLVQDLHMANPSLESPSVKFVEGPNEKIEKSEPTTPVKKAQEAAAFIQKELKQLVIKLVRICLDKANKGSGSGTSSSRYIEQIRTLTKMFNDAAFYKSLTDDGDLASALNKFVSLLGQLSCQACESVVEIVFEILPLLETGKRFEYIENTLMKLPQHGVQNLLLHRLLSYPLCAEAAVRQMLSGPETCEMIARIAEEVVVDNDREKLNLLHKCFFQTDTGDILINAKTVDKILLSMCGPLEQPVVDDAVEVCGSFIAQIMPVICSNNNSSLHVRQHIFLKLFKFSLEHRPEDYLSEDTLWEITTCWQDGLSSKDIEIDDDMLKCCAGIVEELANSAELKADTLDGMAEAMAKFVICSTENIEDEYKRLERIDETLTALLETPLKTTDKVQQFENHCVLLEALHGSVTAGVPFENACLSRNEILPLLQRSTLNFSTIYKLVYQFPPPQDTNDPEDELTEDYCDPNADVLKKWNEPLIAELLQCIRVAGTAECWLEMSVLQSSTEELVLILSEKVQSFMGNSSDLVAIVKERLQQAAVQQSSVIDCRLLSYLRFCPQYAAFEESASILLHEDLSENLVTQGALKTYVIALQFLLPKLSQKAITLSSAIMGTEPPEIWVKAAVFHALLLNNFEGDVNEQTDRNIIVSAVQFMTSIGERQASQKDLLHYNVEIQRQPYESVINTVEFIKLLTEVLKRFPYELSIKNWDAIRIGLSSWVLSVSKSIAQYQDPKTSLFIVAVYELFAALIDFIRSEKQKSSTELLKNMIDEWDSLFAKEVNLVLFKSYYLLTHEVSVDPGFQACYEALLEQITPVIERLDYSFVYSFCKSNSNITLDHLCNFLFKQLYSVQHSVRLSAVHSLRQLTPHFVADDIELNEKQSESLDASTTICKWHFLNRFEDYLTRYDALITKYLEEFTFKLSELDDLEPIDRHNALSYLFLWDCIINACAKSPVALRAVYTNWLNDNKYEENFLHFLFRAMPVDILKNHGAKVHSNGVYKELTWSQQKDRHLPLERYACHLYTEVLRKLPAVVRRWWNATQSRQKNFIDNLTTNYVSSLICSEELKAIANRKEKHENMQVTVHSSTREVLAVYAIDEARMELVITLAPNYPLGAVKVECGKQIGGRASSRNVGMQLTIFLTHQNGTIYDGLTMWKNNLDKKFEGVEECYVCYTVIHQETCQLPKLTCKTCKKKFHGPCLYKWFTTSSKSTCPICRNVF</sequence>
<feature type="chain" id="PRO_0000404572" description="E3 ubiquitin-protein ligase listerin">
    <location>
        <begin position="1"/>
        <end position="1747"/>
    </location>
</feature>
<feature type="repeat" description="HEAT 1" evidence="3">
    <location>
        <begin position="65"/>
        <end position="102"/>
    </location>
</feature>
<feature type="repeat" description="HEAT 2" evidence="3">
    <location>
        <begin position="106"/>
        <end position="144"/>
    </location>
</feature>
<feature type="repeat" description="HEAT 3" evidence="3">
    <location>
        <begin position="346"/>
        <end position="383"/>
    </location>
</feature>
<feature type="repeat" description="HEAT 4" evidence="3">
    <location>
        <begin position="424"/>
        <end position="461"/>
    </location>
</feature>
<feature type="repeat" description="HEAT 5" evidence="3">
    <location>
        <begin position="508"/>
        <end position="547"/>
    </location>
</feature>
<feature type="repeat" description="HEAT 6" evidence="3">
    <location>
        <begin position="612"/>
        <end position="653"/>
    </location>
</feature>
<feature type="repeat" description="HEAT 7" evidence="3">
    <location>
        <begin position="664"/>
        <end position="711"/>
    </location>
</feature>
<feature type="repeat" description="HEAT 8" evidence="3">
    <location>
        <begin position="789"/>
        <end position="825"/>
    </location>
</feature>
<feature type="repeat" description="HEAT 9" evidence="3">
    <location>
        <begin position="952"/>
        <end position="989"/>
    </location>
</feature>
<feature type="repeat" description="HEAT 10" evidence="3">
    <location>
        <begin position="1005"/>
        <end position="1042"/>
    </location>
</feature>
<feature type="repeat" description="HEAT 11" evidence="3">
    <location>
        <begin position="1053"/>
        <end position="1090"/>
    </location>
</feature>
<feature type="repeat" description="HEAT 12" evidence="3">
    <location>
        <begin position="1129"/>
        <end position="1166"/>
    </location>
</feature>
<feature type="repeat" description="HEAT 13" evidence="3">
    <location>
        <begin position="1216"/>
        <end position="1258"/>
    </location>
</feature>
<feature type="repeat" description="HEAT 14" evidence="3">
    <location>
        <begin position="1269"/>
        <end position="1307"/>
    </location>
</feature>
<feature type="repeat" description="HEAT 15" evidence="3">
    <location>
        <begin position="1330"/>
        <end position="1363"/>
    </location>
</feature>
<feature type="repeat" description="HEAT 16" evidence="3">
    <location>
        <begin position="1364"/>
        <end position="1400"/>
    </location>
</feature>
<feature type="repeat" description="HEAT 17" evidence="3">
    <location>
        <begin position="1500"/>
        <end position="1539"/>
    </location>
</feature>
<feature type="zinc finger region" description="RING-type" evidence="4">
    <location>
        <begin position="1697"/>
        <end position="1744"/>
    </location>
</feature>
<feature type="region of interest" description="Disordered" evidence="5">
    <location>
        <begin position="1"/>
        <end position="24"/>
    </location>
</feature>
<feature type="compositionally biased region" description="Polar residues" evidence="5">
    <location>
        <begin position="8"/>
        <end position="24"/>
    </location>
</feature>
<feature type="modified residue" description="Phosphoserine" evidence="6">
    <location>
        <position position="566"/>
    </location>
</feature>
<feature type="sequence conflict" description="In Ref. 3; AAM11308." evidence="9" ref="3">
    <original>Q</original>
    <variation>L</variation>
    <location>
        <position position="70"/>
    </location>
</feature>
<feature type="sequence conflict" description="In Ref. 3; AAM11308." evidence="9" ref="3">
    <original>E</original>
    <variation>D</variation>
    <location>
        <position position="189"/>
    </location>
</feature>
<feature type="sequence conflict" description="In Ref. 3; AAM11308." evidence="9" ref="3">
    <original>P</original>
    <variation>T</variation>
    <location>
        <position position="222"/>
    </location>
</feature>
<feature type="sequence conflict" description="In Ref. 3; AAM11308." evidence="9" ref="3">
    <original>M</original>
    <variation>L</variation>
    <location>
        <position position="434"/>
    </location>
</feature>
<feature type="sequence conflict" description="In Ref. 3; AAM11308." evidence="9" ref="3">
    <original>E</original>
    <variation>D</variation>
    <location>
        <position position="524"/>
    </location>
</feature>
<feature type="sequence conflict" description="In Ref. 3; AAM11308." evidence="9" ref="3">
    <original>N</original>
    <variation>H</variation>
    <location>
        <position position="684"/>
    </location>
</feature>
<feature type="sequence conflict" description="In Ref. 3; AAM11308." evidence="9" ref="3">
    <original>R</original>
    <variation>K</variation>
    <location>
        <position position="1190"/>
    </location>
</feature>
<feature type="sequence conflict" description="In Ref. 3; AAM11308." evidence="9" ref="3">
    <original>V</original>
    <variation>I</variation>
    <location>
        <position position="1324"/>
    </location>
</feature>
<feature type="sequence conflict" description="In Ref. 3; AAM11308." evidence="9" ref="3">
    <original>V</original>
    <variation>A</variation>
    <location>
        <position position="1344"/>
    </location>
</feature>
<gene>
    <name evidence="8 10" type="primary">Ltn1</name>
    <name evidence="10" type="synonym">l(3)76BDr</name>
    <name evidence="10" type="ORF">CG32210</name>
</gene>
<dbReference type="EC" id="2.3.2.27" evidence="2"/>
<dbReference type="EMBL" id="AE014296">
    <property type="protein sequence ID" value="AAF49146.2"/>
    <property type="molecule type" value="Genomic_DNA"/>
</dbReference>
<dbReference type="EMBL" id="AY094955">
    <property type="protein sequence ID" value="AAM11308.1"/>
    <property type="molecule type" value="mRNA"/>
</dbReference>
<dbReference type="RefSeq" id="NP_730427.1">
    <property type="nucleotide sequence ID" value="NM_168802.2"/>
</dbReference>
<dbReference type="SMR" id="Q9VW09"/>
<dbReference type="BioGRID" id="65397">
    <property type="interactions" value="2"/>
</dbReference>
<dbReference type="FunCoup" id="Q9VW09">
    <property type="interactions" value="2086"/>
</dbReference>
<dbReference type="STRING" id="7227.FBpp0074742"/>
<dbReference type="iPTMnet" id="Q9VW09"/>
<dbReference type="PaxDb" id="7227-FBpp0074742"/>
<dbReference type="EnsemblMetazoa" id="FBtr0074974">
    <property type="protein sequence ID" value="FBpp0074742"/>
    <property type="gene ID" value="FBgn0262517"/>
</dbReference>
<dbReference type="GeneID" id="40127"/>
<dbReference type="KEGG" id="dme:Dmel_CG32210"/>
<dbReference type="UCSC" id="CG32210-RA">
    <property type="organism name" value="d. melanogaster"/>
</dbReference>
<dbReference type="AGR" id="FB:FBgn0262517"/>
<dbReference type="CTD" id="26046"/>
<dbReference type="FlyBase" id="FBgn0262517">
    <property type="gene designation" value="Ltn1"/>
</dbReference>
<dbReference type="VEuPathDB" id="VectorBase:FBgn0262517"/>
<dbReference type="eggNOG" id="KOG0803">
    <property type="taxonomic scope" value="Eukaryota"/>
</dbReference>
<dbReference type="GeneTree" id="ENSGT00390000016055"/>
<dbReference type="HOGENOM" id="CLU_002412_0_0_1"/>
<dbReference type="InParanoid" id="Q9VW09"/>
<dbReference type="OMA" id="IYGSHWE"/>
<dbReference type="OrthoDB" id="6108at2759"/>
<dbReference type="PhylomeDB" id="Q9VW09"/>
<dbReference type="Reactome" id="R-DME-983168">
    <property type="pathway name" value="Antigen processing: Ubiquitination &amp; Proteasome degradation"/>
</dbReference>
<dbReference type="UniPathway" id="UPA00143"/>
<dbReference type="BioGRID-ORCS" id="40127">
    <property type="hits" value="0 hits in 1 CRISPR screen"/>
</dbReference>
<dbReference type="GenomeRNAi" id="40127"/>
<dbReference type="PRO" id="PR:Q9VW09"/>
<dbReference type="Proteomes" id="UP000000803">
    <property type="component" value="Chromosome 3L"/>
</dbReference>
<dbReference type="Bgee" id="FBgn0262517">
    <property type="expression patterns" value="Expressed in indirect flight muscle cell (Drosophila) in body wall and 104 other cell types or tissues"/>
</dbReference>
<dbReference type="GO" id="GO:0005829">
    <property type="term" value="C:cytosol"/>
    <property type="evidence" value="ECO:0000250"/>
    <property type="project" value="UniProtKB"/>
</dbReference>
<dbReference type="GO" id="GO:1990112">
    <property type="term" value="C:RQC complex"/>
    <property type="evidence" value="ECO:0000318"/>
    <property type="project" value="GO_Central"/>
</dbReference>
<dbReference type="GO" id="GO:0043023">
    <property type="term" value="F:ribosomal large subunit binding"/>
    <property type="evidence" value="ECO:0000318"/>
    <property type="project" value="GO_Central"/>
</dbReference>
<dbReference type="GO" id="GO:0061630">
    <property type="term" value="F:ubiquitin protein ligase activity"/>
    <property type="evidence" value="ECO:0000318"/>
    <property type="project" value="GO_Central"/>
</dbReference>
<dbReference type="GO" id="GO:0008270">
    <property type="term" value="F:zinc ion binding"/>
    <property type="evidence" value="ECO:0000255"/>
    <property type="project" value="FlyBase"/>
</dbReference>
<dbReference type="GO" id="GO:0016567">
    <property type="term" value="P:protein ubiquitination"/>
    <property type="evidence" value="ECO:0007669"/>
    <property type="project" value="UniProtKB-UniPathway"/>
</dbReference>
<dbReference type="GO" id="GO:0072344">
    <property type="term" value="P:rescue of stalled ribosome"/>
    <property type="evidence" value="ECO:0000318"/>
    <property type="project" value="GO_Central"/>
</dbReference>
<dbReference type="GO" id="GO:1990116">
    <property type="term" value="P:ribosome-associated ubiquitin-dependent protein catabolic process"/>
    <property type="evidence" value="ECO:0000315"/>
    <property type="project" value="FlyBase"/>
</dbReference>
<dbReference type="CDD" id="cd16491">
    <property type="entry name" value="RING-CH-C4HC3_LTN1"/>
    <property type="match status" value="1"/>
</dbReference>
<dbReference type="FunFam" id="3.30.40.10:FF:000038">
    <property type="entry name" value="E3 ubiquitin-protein ligase listerin"/>
    <property type="match status" value="1"/>
</dbReference>
<dbReference type="Gene3D" id="1.25.10.10">
    <property type="entry name" value="Leucine-rich Repeat Variant"/>
    <property type="match status" value="1"/>
</dbReference>
<dbReference type="Gene3D" id="3.30.40.10">
    <property type="entry name" value="Zinc/RING finger domain, C3HC4 (zinc finger)"/>
    <property type="match status" value="1"/>
</dbReference>
<dbReference type="InterPro" id="IPR011989">
    <property type="entry name" value="ARM-like"/>
</dbReference>
<dbReference type="InterPro" id="IPR016024">
    <property type="entry name" value="ARM-type_fold"/>
</dbReference>
<dbReference type="InterPro" id="IPR039795">
    <property type="entry name" value="LTN1/Rkr1"/>
</dbReference>
<dbReference type="InterPro" id="IPR054477">
    <property type="entry name" value="LTN1_E3_ligase_6th"/>
</dbReference>
<dbReference type="InterPro" id="IPR054476">
    <property type="entry name" value="Ltn1_N"/>
</dbReference>
<dbReference type="InterPro" id="IPR054478">
    <property type="entry name" value="LTN1_UBC"/>
</dbReference>
<dbReference type="InterPro" id="IPR039804">
    <property type="entry name" value="RING-CH-C4HC3_LTN1"/>
</dbReference>
<dbReference type="InterPro" id="IPR001841">
    <property type="entry name" value="Znf_RING"/>
</dbReference>
<dbReference type="InterPro" id="IPR013083">
    <property type="entry name" value="Znf_RING/FYVE/PHD"/>
</dbReference>
<dbReference type="PANTHER" id="PTHR12389:SF0">
    <property type="entry name" value="E3 UBIQUITIN-PROTEIN LIGASE LISTERIN"/>
    <property type="match status" value="1"/>
</dbReference>
<dbReference type="PANTHER" id="PTHR12389">
    <property type="entry name" value="ZINC FINGER PROTEIN 294"/>
    <property type="match status" value="1"/>
</dbReference>
<dbReference type="Pfam" id="PF22958">
    <property type="entry name" value="Ltn1_1st"/>
    <property type="match status" value="1"/>
</dbReference>
<dbReference type="Pfam" id="PF22999">
    <property type="entry name" value="LTN1_E3_ligase_6th"/>
    <property type="match status" value="1"/>
</dbReference>
<dbReference type="Pfam" id="PF23009">
    <property type="entry name" value="UBC_like"/>
    <property type="match status" value="1"/>
</dbReference>
<dbReference type="SUPFAM" id="SSF48371">
    <property type="entry name" value="ARM repeat"/>
    <property type="match status" value="1"/>
</dbReference>
<dbReference type="SUPFAM" id="SSF57850">
    <property type="entry name" value="RING/U-box"/>
    <property type="match status" value="1"/>
</dbReference>
<dbReference type="PROSITE" id="PS50089">
    <property type="entry name" value="ZF_RING_2"/>
    <property type="match status" value="1"/>
</dbReference>
<organism>
    <name type="scientific">Drosophila melanogaster</name>
    <name type="common">Fruit fly</name>
    <dbReference type="NCBI Taxonomy" id="7227"/>
    <lineage>
        <taxon>Eukaryota</taxon>
        <taxon>Metazoa</taxon>
        <taxon>Ecdysozoa</taxon>
        <taxon>Arthropoda</taxon>
        <taxon>Hexapoda</taxon>
        <taxon>Insecta</taxon>
        <taxon>Pterygota</taxon>
        <taxon>Neoptera</taxon>
        <taxon>Endopterygota</taxon>
        <taxon>Diptera</taxon>
        <taxon>Brachycera</taxon>
        <taxon>Muscomorpha</taxon>
        <taxon>Ephydroidea</taxon>
        <taxon>Drosophilidae</taxon>
        <taxon>Drosophila</taxon>
        <taxon>Sophophora</taxon>
    </lineage>
</organism>
<name>LTN1_DROME</name>
<keyword id="KW-0963">Cytoplasm</keyword>
<keyword id="KW-0479">Metal-binding</keyword>
<keyword id="KW-0597">Phosphoprotein</keyword>
<keyword id="KW-1185">Reference proteome</keyword>
<keyword id="KW-0677">Repeat</keyword>
<keyword id="KW-0808">Transferase</keyword>
<keyword id="KW-0833">Ubl conjugation pathway</keyword>
<keyword id="KW-0862">Zinc</keyword>
<keyword id="KW-0863">Zinc-finger</keyword>